<keyword id="KW-0008">Acetylcholine receptor inhibiting toxin</keyword>
<keyword id="KW-0903">Direct protein sequencing</keyword>
<keyword id="KW-1015">Disulfide bond</keyword>
<keyword id="KW-0872">Ion channel impairing toxin</keyword>
<keyword id="KW-0528">Neurotoxin</keyword>
<keyword id="KW-0629">Postsynaptic neurotoxin</keyword>
<keyword id="KW-0964">Secreted</keyword>
<keyword id="KW-0732">Signal</keyword>
<keyword id="KW-0800">Toxin</keyword>
<comment type="function">
    <text evidence="2">Inhibits carbachol-induced muscle contraction in a reversible manner.</text>
</comment>
<comment type="subcellular location">
    <subcellularLocation>
        <location evidence="2">Secreted</location>
    </subcellularLocation>
</comment>
<comment type="tissue specificity">
    <text evidence="4">Expressed by the venom gland.</text>
</comment>
<comment type="mass spectrometry" mass="7357.0" method="Electrospray" evidence="2"/>
<comment type="similarity">
    <text evidence="4">Belongs to the three-finger toxin family. Ancestral subfamily. Orphan group IV sub-subfamily.</text>
</comment>
<dbReference type="EMBL" id="X51414">
    <property type="protein sequence ID" value="CAA35776.1"/>
    <property type="molecule type" value="mRNA"/>
</dbReference>
<dbReference type="EMBL" id="AJ006136">
    <property type="protein sequence ID" value="CAA06886.1"/>
    <property type="molecule type" value="mRNA"/>
</dbReference>
<dbReference type="EMBL" id="AJ515363">
    <property type="protein sequence ID" value="CAD56380.1"/>
    <property type="molecule type" value="Genomic_DNA"/>
</dbReference>
<dbReference type="PIR" id="S08401">
    <property type="entry name" value="S08401"/>
</dbReference>
<dbReference type="BMRB" id="P15818"/>
<dbReference type="SMR" id="P15818"/>
<dbReference type="GO" id="GO:0005576">
    <property type="term" value="C:extracellular region"/>
    <property type="evidence" value="ECO:0007669"/>
    <property type="project" value="UniProtKB-SubCell"/>
</dbReference>
<dbReference type="GO" id="GO:0030550">
    <property type="term" value="F:acetylcholine receptor inhibitor activity"/>
    <property type="evidence" value="ECO:0007669"/>
    <property type="project" value="UniProtKB-KW"/>
</dbReference>
<dbReference type="GO" id="GO:0099106">
    <property type="term" value="F:ion channel regulator activity"/>
    <property type="evidence" value="ECO:0007669"/>
    <property type="project" value="UniProtKB-KW"/>
</dbReference>
<dbReference type="GO" id="GO:0090729">
    <property type="term" value="F:toxin activity"/>
    <property type="evidence" value="ECO:0007669"/>
    <property type="project" value="UniProtKB-KW"/>
</dbReference>
<dbReference type="CDD" id="cd00206">
    <property type="entry name" value="TFP_snake_toxin"/>
    <property type="match status" value="1"/>
</dbReference>
<dbReference type="FunFam" id="2.10.60.10:FF:000024">
    <property type="entry name" value="Cytotoxin 1"/>
    <property type="match status" value="1"/>
</dbReference>
<dbReference type="Gene3D" id="2.10.60.10">
    <property type="entry name" value="CD59"/>
    <property type="match status" value="1"/>
</dbReference>
<dbReference type="InterPro" id="IPR003571">
    <property type="entry name" value="Snake_3FTx"/>
</dbReference>
<dbReference type="InterPro" id="IPR045860">
    <property type="entry name" value="Snake_toxin-like_sf"/>
</dbReference>
<dbReference type="InterPro" id="IPR018354">
    <property type="entry name" value="Snake_toxin_con_site"/>
</dbReference>
<dbReference type="InterPro" id="IPR054131">
    <property type="entry name" value="Toxin_cobra-type"/>
</dbReference>
<dbReference type="Pfam" id="PF21947">
    <property type="entry name" value="Toxin_cobra-type"/>
    <property type="match status" value="1"/>
</dbReference>
<dbReference type="SUPFAM" id="SSF57302">
    <property type="entry name" value="Snake toxin-like"/>
    <property type="match status" value="1"/>
</dbReference>
<dbReference type="PROSITE" id="PS00272">
    <property type="entry name" value="SNAKE_TOXIN"/>
    <property type="match status" value="1"/>
</dbReference>
<organism>
    <name type="scientific">Bungarus multicinctus</name>
    <name type="common">Many-banded krait</name>
    <dbReference type="NCBI Taxonomy" id="8616"/>
    <lineage>
        <taxon>Eukaryota</taxon>
        <taxon>Metazoa</taxon>
        <taxon>Chordata</taxon>
        <taxon>Craniata</taxon>
        <taxon>Vertebrata</taxon>
        <taxon>Euteleostomi</taxon>
        <taxon>Lepidosauria</taxon>
        <taxon>Squamata</taxon>
        <taxon>Bifurcata</taxon>
        <taxon>Unidentata</taxon>
        <taxon>Episquamata</taxon>
        <taxon>Toxicofera</taxon>
        <taxon>Serpentes</taxon>
        <taxon>Colubroidea</taxon>
        <taxon>Elapidae</taxon>
        <taxon>Bungarinae</taxon>
        <taxon>Bungarus</taxon>
    </lineage>
</organism>
<proteinExistence type="evidence at protein level"/>
<protein>
    <recommendedName>
        <fullName evidence="4">Long neurotoxin homolog</fullName>
    </recommendedName>
    <alternativeName>
        <fullName evidence="3">BM10-1</fullName>
    </alternativeName>
</protein>
<accession>P15818</accession>
<accession>Q9YGI9</accession>
<evidence type="ECO:0000250" key="1">
    <source>
        <dbReference type="UniProtKB" id="P81782"/>
    </source>
</evidence>
<evidence type="ECO:0000269" key="2">
    <source>
    </source>
</evidence>
<evidence type="ECO:0000303" key="3">
    <source>
    </source>
</evidence>
<evidence type="ECO:0000305" key="4"/>
<feature type="signal peptide" evidence="2">
    <location>
        <begin position="1"/>
        <end position="21"/>
    </location>
</feature>
<feature type="chain" id="PRO_0000035416" description="Long neurotoxin homolog" evidence="2">
    <location>
        <begin position="22"/>
        <end position="87"/>
    </location>
</feature>
<feature type="disulfide bond" evidence="1">
    <location>
        <begin position="24"/>
        <end position="47"/>
    </location>
</feature>
<feature type="disulfide bond" evidence="1">
    <location>
        <begin position="27"/>
        <end position="32"/>
    </location>
</feature>
<feature type="disulfide bond" evidence="1">
    <location>
        <begin position="40"/>
        <end position="64"/>
    </location>
</feature>
<feature type="disulfide bond" evidence="1">
    <location>
        <begin position="68"/>
        <end position="80"/>
    </location>
</feature>
<feature type="disulfide bond" evidence="1">
    <location>
        <begin position="81"/>
        <end position="86"/>
    </location>
</feature>
<feature type="sequence conflict" description="In Ref. 2; CAA06886." evidence="4" ref="2">
    <original>Y</original>
    <variation>D</variation>
    <location>
        <position position="77"/>
    </location>
</feature>
<name>3NO4H_BUNMU</name>
<reference key="1">
    <citation type="journal article" date="1990" name="Nucleic Acids Res.">
        <title>A cDNA sequence encoding a neurotoxin-homolog from Bungarus multicinctus.</title>
        <authorList>
            <person name="Danse J.-M."/>
            <person name="Garnier J.-M."/>
            <person name="Kempf J."/>
        </authorList>
    </citation>
    <scope>NUCLEOTIDE SEQUENCE [MRNA]</scope>
    <source>
        <tissue>Venom gland</tissue>
    </source>
</reference>
<reference key="2">
    <citation type="journal article" date="1998" name="Biochem. Mol. Biol. Int.">
        <title>cDNA cloning and sequence analysis of six neurotoxin-like proteins from Chinese continental banded krait.</title>
        <authorList>
            <person name="Qian Y.-C."/>
            <person name="Fan C.-Y."/>
            <person name="Gong Y."/>
            <person name="Yang S.-L."/>
        </authorList>
    </citation>
    <scope>NUCLEOTIDE SEQUENCE [MRNA]</scope>
    <source>
        <tissue>Venom gland</tissue>
    </source>
</reference>
<reference key="3">
    <citation type="journal article" date="2003" name="Toxicon">
        <title>Novel neurotoxins from Taiwan banded krait (Bungarus multicinctus) venom: purification, characterization and gene organization.</title>
        <authorList>
            <person name="Chang L.-S."/>
            <person name="Chung C."/>
            <person name="Liou J.-C."/>
            <person name="Chang C.-W."/>
            <person name="Yang C.-C."/>
        </authorList>
    </citation>
    <scope>NUCLEOTIDE SEQUENCE [GENOMIC DNA]</scope>
    <scope>PROTEIN SEQUENCE OF 22-87</scope>
    <scope>FUNCTION</scope>
    <scope>MASS SPECTROMETRY</scope>
    <scope>SUBCELLULAR LOCATION</scope>
    <source>
        <tissue>Liver</tissue>
        <tissue>Venom</tissue>
    </source>
</reference>
<sequence length="87" mass="9658">MKTLLLTLVVVTIVCLDLGYTMKCKICHFDTCRAGELKVCASGEKYCFKESWREARGTRIERGCAATCPKGSVYGLYVLCCTTDDCN</sequence>